<comment type="function">
    <text evidence="1">Produces ATP from ADP in the presence of a proton gradient across the membrane.</text>
</comment>
<comment type="subunit">
    <text>F-type ATPases have 2 components, CF(1) - the catalytic core - and CF(0) - the membrane proton channel. CF(1) has five subunits: alpha(3), beta(3), gamma(1), delta(1), epsilon(1). CF(0) has three main subunits: a, b and c.</text>
</comment>
<comment type="subcellular location">
    <subcellularLocation>
        <location evidence="1">Cell membrane</location>
        <topology evidence="1">Peripheral membrane protein</topology>
    </subcellularLocation>
</comment>
<comment type="similarity">
    <text evidence="1">Belongs to the ATPase epsilon chain family.</text>
</comment>
<name>ATPE_LISMF</name>
<feature type="chain" id="PRO_0000188153" description="ATP synthase epsilon chain">
    <location>
        <begin position="1"/>
        <end position="134"/>
    </location>
</feature>
<gene>
    <name evidence="1" type="primary">atpC</name>
    <name type="ordered locus">LMOf2365_2501</name>
</gene>
<sequence>MGSLNVSIVTPDGPVYEGVAQMVIARTKAGELGILPGHVPLVAPLKIDIVRLKVESGEEWVAVNGGFMEVNGEEVNILADTAEREQDIDIDRAEKAKQRAEEELSRAKEQKVDEVMAQLALQRAINRIHAKEHN</sequence>
<evidence type="ECO:0000255" key="1">
    <source>
        <dbReference type="HAMAP-Rule" id="MF_00530"/>
    </source>
</evidence>
<reference key="1">
    <citation type="journal article" date="2004" name="Nucleic Acids Res.">
        <title>Whole genome comparisons of serotype 4b and 1/2a strains of the food-borne pathogen Listeria monocytogenes reveal new insights into the core genome components of this species.</title>
        <authorList>
            <person name="Nelson K.E."/>
            <person name="Fouts D.E."/>
            <person name="Mongodin E.F."/>
            <person name="Ravel J."/>
            <person name="DeBoy R.T."/>
            <person name="Kolonay J.F."/>
            <person name="Rasko D.A."/>
            <person name="Angiuoli S.V."/>
            <person name="Gill S.R."/>
            <person name="Paulsen I.T."/>
            <person name="Peterson J.D."/>
            <person name="White O."/>
            <person name="Nelson W.C."/>
            <person name="Nierman W.C."/>
            <person name="Beanan M.J."/>
            <person name="Brinkac L.M."/>
            <person name="Daugherty S.C."/>
            <person name="Dodson R.J."/>
            <person name="Durkin A.S."/>
            <person name="Madupu R."/>
            <person name="Haft D.H."/>
            <person name="Selengut J."/>
            <person name="Van Aken S.E."/>
            <person name="Khouri H.M."/>
            <person name="Fedorova N."/>
            <person name="Forberger H.A."/>
            <person name="Tran B."/>
            <person name="Kathariou S."/>
            <person name="Wonderling L.D."/>
            <person name="Uhlich G.A."/>
            <person name="Bayles D.O."/>
            <person name="Luchansky J.B."/>
            <person name="Fraser C.M."/>
        </authorList>
    </citation>
    <scope>NUCLEOTIDE SEQUENCE [LARGE SCALE GENOMIC DNA]</scope>
    <source>
        <strain>F2365</strain>
    </source>
</reference>
<proteinExistence type="inferred from homology"/>
<accession>Q71WQ0</accession>
<keyword id="KW-0066">ATP synthesis</keyword>
<keyword id="KW-1003">Cell membrane</keyword>
<keyword id="KW-0139">CF(1)</keyword>
<keyword id="KW-0375">Hydrogen ion transport</keyword>
<keyword id="KW-0406">Ion transport</keyword>
<keyword id="KW-0472">Membrane</keyword>
<keyword id="KW-0813">Transport</keyword>
<protein>
    <recommendedName>
        <fullName evidence="1">ATP synthase epsilon chain</fullName>
    </recommendedName>
    <alternativeName>
        <fullName evidence="1">ATP synthase F1 sector epsilon subunit</fullName>
    </alternativeName>
    <alternativeName>
        <fullName evidence="1">F-ATPase epsilon subunit</fullName>
    </alternativeName>
</protein>
<dbReference type="EMBL" id="AE017262">
    <property type="protein sequence ID" value="AAT05266.1"/>
    <property type="molecule type" value="Genomic_DNA"/>
</dbReference>
<dbReference type="RefSeq" id="WP_003723461.1">
    <property type="nucleotide sequence ID" value="NC_002973.6"/>
</dbReference>
<dbReference type="SMR" id="Q71WQ0"/>
<dbReference type="KEGG" id="lmf:LMOf2365_2501"/>
<dbReference type="HOGENOM" id="CLU_084338_1_0_9"/>
<dbReference type="GO" id="GO:0005886">
    <property type="term" value="C:plasma membrane"/>
    <property type="evidence" value="ECO:0007669"/>
    <property type="project" value="UniProtKB-SubCell"/>
</dbReference>
<dbReference type="GO" id="GO:0045259">
    <property type="term" value="C:proton-transporting ATP synthase complex"/>
    <property type="evidence" value="ECO:0007669"/>
    <property type="project" value="UniProtKB-KW"/>
</dbReference>
<dbReference type="GO" id="GO:0005524">
    <property type="term" value="F:ATP binding"/>
    <property type="evidence" value="ECO:0007669"/>
    <property type="project" value="UniProtKB-UniRule"/>
</dbReference>
<dbReference type="GO" id="GO:0046933">
    <property type="term" value="F:proton-transporting ATP synthase activity, rotational mechanism"/>
    <property type="evidence" value="ECO:0007669"/>
    <property type="project" value="UniProtKB-UniRule"/>
</dbReference>
<dbReference type="CDD" id="cd12152">
    <property type="entry name" value="F1-ATPase_delta"/>
    <property type="match status" value="1"/>
</dbReference>
<dbReference type="FunFam" id="1.20.5.440:FF:000001">
    <property type="entry name" value="ATP synthase epsilon chain"/>
    <property type="match status" value="1"/>
</dbReference>
<dbReference type="FunFam" id="2.60.15.10:FF:000001">
    <property type="entry name" value="ATP synthase epsilon chain"/>
    <property type="match status" value="1"/>
</dbReference>
<dbReference type="Gene3D" id="1.20.5.440">
    <property type="entry name" value="ATP synthase delta/epsilon subunit, C-terminal domain"/>
    <property type="match status" value="1"/>
</dbReference>
<dbReference type="Gene3D" id="2.60.15.10">
    <property type="entry name" value="F0F1 ATP synthase delta/epsilon subunit, N-terminal"/>
    <property type="match status" value="1"/>
</dbReference>
<dbReference type="HAMAP" id="MF_00530">
    <property type="entry name" value="ATP_synth_epsil_bac"/>
    <property type="match status" value="1"/>
</dbReference>
<dbReference type="InterPro" id="IPR036794">
    <property type="entry name" value="ATP_F1_dsu/esu_C_sf"/>
</dbReference>
<dbReference type="InterPro" id="IPR001469">
    <property type="entry name" value="ATP_synth_F1_dsu/esu"/>
</dbReference>
<dbReference type="InterPro" id="IPR020546">
    <property type="entry name" value="ATP_synth_F1_dsu/esu_N"/>
</dbReference>
<dbReference type="InterPro" id="IPR020547">
    <property type="entry name" value="ATP_synth_F1_esu_C"/>
</dbReference>
<dbReference type="InterPro" id="IPR036771">
    <property type="entry name" value="ATPsynth_dsu/esu_N"/>
</dbReference>
<dbReference type="NCBIfam" id="TIGR01216">
    <property type="entry name" value="ATP_synt_epsi"/>
    <property type="match status" value="1"/>
</dbReference>
<dbReference type="NCBIfam" id="NF001846">
    <property type="entry name" value="PRK00571.1-3"/>
    <property type="match status" value="1"/>
</dbReference>
<dbReference type="NCBIfam" id="NF009977">
    <property type="entry name" value="PRK13442.1"/>
    <property type="match status" value="1"/>
</dbReference>
<dbReference type="PANTHER" id="PTHR13822">
    <property type="entry name" value="ATP SYNTHASE DELTA/EPSILON CHAIN"/>
    <property type="match status" value="1"/>
</dbReference>
<dbReference type="PANTHER" id="PTHR13822:SF10">
    <property type="entry name" value="ATP SYNTHASE EPSILON CHAIN, CHLOROPLASTIC"/>
    <property type="match status" value="1"/>
</dbReference>
<dbReference type="Pfam" id="PF00401">
    <property type="entry name" value="ATP-synt_DE"/>
    <property type="match status" value="1"/>
</dbReference>
<dbReference type="Pfam" id="PF02823">
    <property type="entry name" value="ATP-synt_DE_N"/>
    <property type="match status" value="1"/>
</dbReference>
<dbReference type="SUPFAM" id="SSF46604">
    <property type="entry name" value="Epsilon subunit of F1F0-ATP synthase C-terminal domain"/>
    <property type="match status" value="1"/>
</dbReference>
<dbReference type="SUPFAM" id="SSF51344">
    <property type="entry name" value="Epsilon subunit of F1F0-ATP synthase N-terminal domain"/>
    <property type="match status" value="1"/>
</dbReference>
<organism>
    <name type="scientific">Listeria monocytogenes serotype 4b (strain F2365)</name>
    <dbReference type="NCBI Taxonomy" id="265669"/>
    <lineage>
        <taxon>Bacteria</taxon>
        <taxon>Bacillati</taxon>
        <taxon>Bacillota</taxon>
        <taxon>Bacilli</taxon>
        <taxon>Bacillales</taxon>
        <taxon>Listeriaceae</taxon>
        <taxon>Listeria</taxon>
    </lineage>
</organism>